<evidence type="ECO:0000250" key="1"/>
<evidence type="ECO:0000255" key="2"/>
<evidence type="ECO:0000255" key="3">
    <source>
        <dbReference type="PROSITE-ProRule" id="PRU00434"/>
    </source>
</evidence>
<evidence type="ECO:0000255" key="4">
    <source>
        <dbReference type="PROSITE-ProRule" id="PRU00441"/>
    </source>
</evidence>
<evidence type="ECO:0000269" key="5">
    <source>
    </source>
</evidence>
<evidence type="ECO:0000269" key="6">
    <source>
    </source>
</evidence>
<evidence type="ECO:0000269" key="7">
    <source>
    </source>
</evidence>
<evidence type="ECO:0000305" key="8"/>
<gene>
    <name type="primary">VMR1</name>
    <name type="ordered locus">YHL035C</name>
</gene>
<comment type="subunit">
    <text evidence="1">ABC transporter which may be involved in multidrug resistance.</text>
</comment>
<comment type="subcellular location">
    <subcellularLocation>
        <location evidence="8">Vacuole membrane</location>
        <topology evidence="8">Multi-pass membrane protein</topology>
    </subcellularLocation>
</comment>
<comment type="induction">
    <text evidence="5 6 7">Under the control of the iron homeostasis regulating AFT1 and AFT2 transcription factors. Up-regulated upon SUB2 overexpression.</text>
</comment>
<comment type="similarity">
    <text evidence="8">Belongs to the ABC transporter superfamily.</text>
</comment>
<organism>
    <name type="scientific">Saccharomyces cerevisiae (strain ATCC 204508 / S288c)</name>
    <name type="common">Baker's yeast</name>
    <dbReference type="NCBI Taxonomy" id="559292"/>
    <lineage>
        <taxon>Eukaryota</taxon>
        <taxon>Fungi</taxon>
        <taxon>Dikarya</taxon>
        <taxon>Ascomycota</taxon>
        <taxon>Saccharomycotina</taxon>
        <taxon>Saccharomycetes</taxon>
        <taxon>Saccharomycetales</taxon>
        <taxon>Saccharomycetaceae</taxon>
        <taxon>Saccharomyces</taxon>
    </lineage>
</organism>
<accession>P38735</accession>
<accession>D3DKT3</accession>
<feature type="chain" id="PRO_0000093465" description="ABC transporter ATP-binding protein/permease VMR1">
    <location>
        <begin position="1"/>
        <end position="1592"/>
    </location>
</feature>
<feature type="topological domain" description="Vacuolar" evidence="1">
    <location>
        <begin position="1"/>
        <end position="33"/>
    </location>
</feature>
<feature type="transmembrane region" description="Helical; Name=1" evidence="4">
    <location>
        <begin position="34"/>
        <end position="54"/>
    </location>
</feature>
<feature type="topological domain" description="Cytoplasmic" evidence="1">
    <location>
        <begin position="55"/>
        <end position="74"/>
    </location>
</feature>
<feature type="transmembrane region" description="Helical; Name=2" evidence="4">
    <location>
        <begin position="75"/>
        <end position="95"/>
    </location>
</feature>
<feature type="topological domain" description="Vacuolar" evidence="1">
    <location>
        <begin position="96"/>
        <end position="100"/>
    </location>
</feature>
<feature type="transmembrane region" description="Helical; Name=3" evidence="4">
    <location>
        <begin position="101"/>
        <end position="121"/>
    </location>
</feature>
<feature type="topological domain" description="Cytoplasmic" evidence="1">
    <location>
        <begin position="122"/>
        <end position="131"/>
    </location>
</feature>
<feature type="transmembrane region" description="Helical; Name=4" evidence="4">
    <location>
        <begin position="132"/>
        <end position="152"/>
    </location>
</feature>
<feature type="topological domain" description="Vacuolar" evidence="1">
    <location>
        <begin position="153"/>
        <end position="170"/>
    </location>
</feature>
<feature type="transmembrane region" description="Helical; Name=5" evidence="4">
    <location>
        <begin position="171"/>
        <end position="191"/>
    </location>
</feature>
<feature type="topological domain" description="Cytoplasmic" evidence="1">
    <location>
        <begin position="192"/>
        <end position="329"/>
    </location>
</feature>
<feature type="transmembrane region" description="Helical; Name=6" evidence="4">
    <location>
        <begin position="330"/>
        <end position="350"/>
    </location>
</feature>
<feature type="topological domain" description="Vacuolar" evidence="1">
    <location>
        <begin position="351"/>
        <end position="379"/>
    </location>
</feature>
<feature type="transmembrane region" description="Helical; Name=7" evidence="4">
    <location>
        <begin position="380"/>
        <end position="400"/>
    </location>
</feature>
<feature type="topological domain" description="Cytoplasmic" evidence="1">
    <location>
        <begin position="401"/>
        <end position="465"/>
    </location>
</feature>
<feature type="transmembrane region" description="Helical; Name=8" evidence="4">
    <location>
        <begin position="466"/>
        <end position="486"/>
    </location>
</feature>
<feature type="topological domain" description="Vacuolar" evidence="1">
    <location>
        <begin position="487"/>
        <end position="489"/>
    </location>
</feature>
<feature type="transmembrane region" description="Helical; Name=9" evidence="4">
    <location>
        <begin position="490"/>
        <end position="510"/>
    </location>
</feature>
<feature type="topological domain" description="Cytoplasmic" evidence="1">
    <location>
        <begin position="511"/>
        <end position="572"/>
    </location>
</feature>
<feature type="transmembrane region" description="Helical; Name=10" evidence="4">
    <location>
        <begin position="573"/>
        <end position="593"/>
    </location>
</feature>
<feature type="topological domain" description="Vacuolar" evidence="1">
    <location>
        <begin position="594"/>
        <end position="614"/>
    </location>
</feature>
<feature type="transmembrane region" description="Helical; Name=11" evidence="4">
    <location>
        <begin position="615"/>
        <end position="635"/>
    </location>
</feature>
<feature type="topological domain" description="Cytoplasmic" evidence="1">
    <location>
        <begin position="636"/>
        <end position="989"/>
    </location>
</feature>
<feature type="transmembrane region" description="Helical; Name=12" evidence="4">
    <location>
        <begin position="990"/>
        <end position="1010"/>
    </location>
</feature>
<feature type="topological domain" description="Vacuolar" evidence="1">
    <location>
        <begin position="1011"/>
        <end position="1051"/>
    </location>
</feature>
<feature type="transmembrane region" description="Helical; Name=13" evidence="4">
    <location>
        <begin position="1052"/>
        <end position="1072"/>
    </location>
</feature>
<feature type="topological domain" description="Cytoplasmic" evidence="1">
    <location>
        <begin position="1073"/>
        <end position="1115"/>
    </location>
</feature>
<feature type="transmembrane region" description="Helical; Name=14" evidence="4">
    <location>
        <begin position="1116"/>
        <end position="1136"/>
    </location>
</feature>
<feature type="topological domain" description="Vacuolar" evidence="1">
    <location>
        <position position="1137"/>
    </location>
</feature>
<feature type="transmembrane region" description="Helical; Name=15" evidence="4">
    <location>
        <begin position="1138"/>
        <end position="1158"/>
    </location>
</feature>
<feature type="topological domain" description="Cytoplasmic" evidence="1">
    <location>
        <begin position="1159"/>
        <end position="1229"/>
    </location>
</feature>
<feature type="transmembrane region" description="Helical; Name=16" evidence="4">
    <location>
        <begin position="1230"/>
        <end position="1250"/>
    </location>
</feature>
<feature type="topological domain" description="Vacuolar" evidence="1">
    <location>
        <begin position="1251"/>
        <end position="1252"/>
    </location>
</feature>
<feature type="transmembrane region" description="Helical; Name=17" evidence="4">
    <location>
        <begin position="1253"/>
        <end position="1273"/>
    </location>
</feature>
<feature type="topological domain" description="Cytoplasmic" evidence="1">
    <location>
        <begin position="1274"/>
        <end position="1592"/>
    </location>
</feature>
<feature type="domain" description="ABC transmembrane type-1 1" evidence="4">
    <location>
        <begin position="338"/>
        <end position="632"/>
    </location>
</feature>
<feature type="domain" description="ABC transporter 1" evidence="3">
    <location>
        <begin position="664"/>
        <end position="908"/>
    </location>
</feature>
<feature type="domain" description="ABC transmembrane type-1 2" evidence="4">
    <location>
        <begin position="981"/>
        <end position="1282"/>
    </location>
</feature>
<feature type="domain" description="ABC transporter 2" evidence="3">
    <location>
        <begin position="1323"/>
        <end position="1572"/>
    </location>
</feature>
<feature type="binding site" evidence="3">
    <location>
        <begin position="702"/>
        <end position="709"/>
    </location>
    <ligand>
        <name>ATP</name>
        <dbReference type="ChEBI" id="CHEBI:30616"/>
        <label>1</label>
    </ligand>
</feature>
<feature type="binding site" evidence="3">
    <location>
        <begin position="1357"/>
        <end position="1364"/>
    </location>
    <ligand>
        <name>ATP</name>
        <dbReference type="ChEBI" id="CHEBI:30616"/>
        <label>2</label>
    </ligand>
</feature>
<feature type="glycosylation site" description="N-linked (GlcNAc...) asparagine" evidence="2">
    <location>
        <position position="11"/>
    </location>
</feature>
<feature type="glycosylation site" description="N-linked (GlcNAc...) asparagine" evidence="2">
    <location>
        <position position="370"/>
    </location>
</feature>
<protein>
    <recommendedName>
        <fullName>ABC transporter ATP-binding protein/permease VMR1</fullName>
    </recommendedName>
    <alternativeName>
        <fullName>Vacuolar multidrug resistance protein 1</fullName>
    </alternativeName>
</protein>
<name>VMR1_YEAST</name>
<keyword id="KW-0067">ATP-binding</keyword>
<keyword id="KW-0325">Glycoprotein</keyword>
<keyword id="KW-0472">Membrane</keyword>
<keyword id="KW-0547">Nucleotide-binding</keyword>
<keyword id="KW-1185">Reference proteome</keyword>
<keyword id="KW-0677">Repeat</keyword>
<keyword id="KW-0812">Transmembrane</keyword>
<keyword id="KW-1133">Transmembrane helix</keyword>
<keyword id="KW-0813">Transport</keyword>
<keyword id="KW-0926">Vacuole</keyword>
<proteinExistence type="evidence at transcript level"/>
<sequence>MGTDPLIIRNNGSFWEVDDFTRLGRTQLLSYYLPLAIIASIGIFALCRSGLSRYVRSAECDLVNEYLFGAQEERKEDNSIERLLRNSNTQANYVNVKKQGRILKLRHFDITTIDVKQIDAKNHGGLTFSRPSTSDHLRKSSEIVLMSLQIIGLSFLRVTKINIELTNRDVTTLLLFWLILLSLSILRVYKRSTNLWAICFTAHTTIWISTWIPIRSVYIGNIDDVPSQIFYIFEFVITSTLQPIKLTSPIKDNSSIIYVRDDHTSPSREHISSILSCITWSWITNFIWEAQKNTIKLKDIWGLSMEDYSIFILKGFTRRNKHINNLTLALFESFKTYLLIGMLWVLVNSIVNLLPTILMKRFLEIVDNPNRSSSCMNLAWLYIIGMFICRLTLAICNSQGQFVSDKICLRIRAILIGEIYAKGLRRRLFTSPKTSSDSDSISANLGTIINLISIDSFKVSELANYLYVTVQAVIMIIVVVGLLFNFLGVSAFAGISIILVMFPLNFLLANLLGKFQKQTLKCTDQRISKLNECLQNIRIVKYFAWERNIINEIKSIRQKELRSLLKKSLVWSVTSFLWFVTPTLVTGVTFAICTFVQHEDLNAPLAFTTLSLFTLLKTPLDQLSNMLSFINQSKVSLKRISDFLRMDDTEKYNQLTISPDKNKIEFKNATLTWNENDSDMNAFKLCGLNIKFQIGKLNLILGSTGSGKSALLLGLLGELNLISGSIIVPSLEPKHDLIPDCEGLTNSFAYCSQSAWLLNDTVKNNIIFDNFYNEDRYNKVIDACGLKRDLEILPAGDLTEIGEKGITLSGGQKQRISLARAVYSSAKHVLLDDCLSAVDSHTAVWIYENCITGPLMKNRTCILVTHNVSLTLRNAHFAIVLENGKVKNQGTITELQSKGLFKEKYVQLSSRDSINEKNANRLKAPRKNDSQKIEPVTENINFDANFVNDGQLIEEEEKSNGAISPDVYKWYLKFFGGFKALTALFALYITAQILFISQSWWIRHWVNDTNVRINAPGFAMDTLPLKGMTDSSKNKHNAFYYLTVYFLIGIIQAMLGGFKTMMTFLSGMRASRKIFNNLLDLVLHAQIRFFDVTPVGRIMNRFSKDIEGVDQELIPYLEVTIFCLIQCASIIFLITVITPRFLTVAVIVFVLYFFVGKWYLTASRELKRLDSITKSPIFQHFSETLVGVCTIRAFGDERRFILENMNKIDQNNRAFFYLSVTVKWFSFRVDMIGAFIVLASGSFILLNIANIDSGLAGISLTYAILFTDGALWLVRLYSTFEMNMNSVERLKEYSSIEQENYLGHDEGRILLLNEPSWPKDGEIEIENLSLRYAPNLPPVIRNVSFKVDPQSKIGIVGRTGAGKSTIITALFRLLEPITGCIKIDGQDISKIDLVTLRRSITIIPQDPILFAGTIKSNVDPYDEYDEKKIFKALSQVNLISSHEFEEVLNSEERFNSTHNKFLNLHTEIAEGGLNLSQGERQLLFIARSLLREPKIILLDEATSSIDYDSDHLIQGIIRSEFNKSTILTIAHRLRSVIDYDRIIVMDAGEVKEYDRPSELLKDERGIFYSMCRDSGGLELLKQIAKQSSKMMK</sequence>
<dbReference type="EMBL" id="U11583">
    <property type="protein sequence ID" value="AAB65047.1"/>
    <property type="molecule type" value="Genomic_DNA"/>
</dbReference>
<dbReference type="EMBL" id="BK006934">
    <property type="protein sequence ID" value="DAA06650.1"/>
    <property type="molecule type" value="Genomic_DNA"/>
</dbReference>
<dbReference type="PIR" id="S48933">
    <property type="entry name" value="S48933"/>
</dbReference>
<dbReference type="RefSeq" id="NP_011828.1">
    <property type="nucleotide sequence ID" value="NM_001179115.1"/>
</dbReference>
<dbReference type="SMR" id="P38735"/>
<dbReference type="BioGRID" id="36387">
    <property type="interactions" value="32"/>
</dbReference>
<dbReference type="DIP" id="DIP-6477N"/>
<dbReference type="FunCoup" id="P38735">
    <property type="interactions" value="126"/>
</dbReference>
<dbReference type="IntAct" id="P38735">
    <property type="interactions" value="5"/>
</dbReference>
<dbReference type="MINT" id="P38735"/>
<dbReference type="STRING" id="4932.YHL035C"/>
<dbReference type="GlyCosmos" id="P38735">
    <property type="glycosylation" value="2 sites, No reported glycans"/>
</dbReference>
<dbReference type="GlyGen" id="P38735">
    <property type="glycosylation" value="2 sites"/>
</dbReference>
<dbReference type="iPTMnet" id="P38735"/>
<dbReference type="PaxDb" id="4932-YHL035C"/>
<dbReference type="PeptideAtlas" id="P38735"/>
<dbReference type="EnsemblFungi" id="YHL035C_mRNA">
    <property type="protein sequence ID" value="YHL035C"/>
    <property type="gene ID" value="YHL035C"/>
</dbReference>
<dbReference type="GeneID" id="856350"/>
<dbReference type="KEGG" id="sce:YHL035C"/>
<dbReference type="AGR" id="SGD:S000001027"/>
<dbReference type="SGD" id="S000001027">
    <property type="gene designation" value="VMR1"/>
</dbReference>
<dbReference type="VEuPathDB" id="FungiDB:YHL035C"/>
<dbReference type="eggNOG" id="KOG0054">
    <property type="taxonomic scope" value="Eukaryota"/>
</dbReference>
<dbReference type="GeneTree" id="ENSGT00940000176323"/>
<dbReference type="HOGENOM" id="CLU_000604_27_3_1"/>
<dbReference type="InParanoid" id="P38735"/>
<dbReference type="OMA" id="LTTCFQD"/>
<dbReference type="OrthoDB" id="6500128at2759"/>
<dbReference type="BioCyc" id="YEAST:G3O-31054-MONOMER"/>
<dbReference type="Reactome" id="R-SCE-159418">
    <property type="pathway name" value="Recycling of bile acids and salts"/>
</dbReference>
<dbReference type="Reactome" id="R-SCE-189483">
    <property type="pathway name" value="Heme degradation"/>
</dbReference>
<dbReference type="Reactome" id="R-SCE-382556">
    <property type="pathway name" value="ABC-family proteins mediated transport"/>
</dbReference>
<dbReference type="Reactome" id="R-SCE-9749641">
    <property type="pathway name" value="Aspirin ADME"/>
</dbReference>
<dbReference type="Reactome" id="R-SCE-9753281">
    <property type="pathway name" value="Paracetamol ADME"/>
</dbReference>
<dbReference type="Reactome" id="R-SCE-9754706">
    <property type="pathway name" value="Atorvastatin ADME"/>
</dbReference>
<dbReference type="BioGRID-ORCS" id="856350">
    <property type="hits" value="0 hits in 10 CRISPR screens"/>
</dbReference>
<dbReference type="PRO" id="PR:P38735"/>
<dbReference type="Proteomes" id="UP000002311">
    <property type="component" value="Chromosome VIII"/>
</dbReference>
<dbReference type="RNAct" id="P38735">
    <property type="molecule type" value="protein"/>
</dbReference>
<dbReference type="GO" id="GO:0000329">
    <property type="term" value="C:fungal-type vacuole membrane"/>
    <property type="evidence" value="ECO:0000314"/>
    <property type="project" value="SGD"/>
</dbReference>
<dbReference type="GO" id="GO:0005739">
    <property type="term" value="C:mitochondrion"/>
    <property type="evidence" value="ECO:0007005"/>
    <property type="project" value="SGD"/>
</dbReference>
<dbReference type="GO" id="GO:0008559">
    <property type="term" value="F:ABC-type xenobiotic transporter activity"/>
    <property type="evidence" value="ECO:0000247"/>
    <property type="project" value="SGD"/>
</dbReference>
<dbReference type="GO" id="GO:0005524">
    <property type="term" value="F:ATP binding"/>
    <property type="evidence" value="ECO:0007669"/>
    <property type="project" value="UniProtKB-KW"/>
</dbReference>
<dbReference type="GO" id="GO:0016887">
    <property type="term" value="F:ATP hydrolysis activity"/>
    <property type="evidence" value="ECO:0007669"/>
    <property type="project" value="InterPro"/>
</dbReference>
<dbReference type="GO" id="GO:0042626">
    <property type="term" value="F:ATPase-coupled transmembrane transporter activity"/>
    <property type="evidence" value="ECO:0000318"/>
    <property type="project" value="GO_Central"/>
</dbReference>
<dbReference type="GO" id="GO:0010038">
    <property type="term" value="P:response to metal ion"/>
    <property type="evidence" value="ECO:0000315"/>
    <property type="project" value="SGD"/>
</dbReference>
<dbReference type="GO" id="GO:0055085">
    <property type="term" value="P:transmembrane transport"/>
    <property type="evidence" value="ECO:0000318"/>
    <property type="project" value="GO_Central"/>
</dbReference>
<dbReference type="GO" id="GO:1990961">
    <property type="term" value="P:xenobiotic detoxification by transmembrane export across the plasma membrane"/>
    <property type="evidence" value="ECO:0000315"/>
    <property type="project" value="SGD"/>
</dbReference>
<dbReference type="CDD" id="cd18596">
    <property type="entry name" value="ABC_6TM_VMR1_D1_like"/>
    <property type="match status" value="1"/>
</dbReference>
<dbReference type="CDD" id="cd18604">
    <property type="entry name" value="ABC_6TM_VMR1_D2_like"/>
    <property type="match status" value="1"/>
</dbReference>
<dbReference type="CDD" id="cd03250">
    <property type="entry name" value="ABCC_MRP_domain1"/>
    <property type="match status" value="1"/>
</dbReference>
<dbReference type="CDD" id="cd03369">
    <property type="entry name" value="ABCC_NFT1"/>
    <property type="match status" value="1"/>
</dbReference>
<dbReference type="FunFam" id="1.20.1560.10:FF:000054">
    <property type="entry name" value="ABC bile acid transporter"/>
    <property type="match status" value="1"/>
</dbReference>
<dbReference type="FunFam" id="3.40.50.300:FF:000565">
    <property type="entry name" value="ABC bile acid transporter"/>
    <property type="match status" value="1"/>
</dbReference>
<dbReference type="FunFam" id="3.40.50.300:FF:000825">
    <property type="entry name" value="ABC bile acid transporter"/>
    <property type="match status" value="1"/>
</dbReference>
<dbReference type="FunFam" id="1.20.1560.10:FF:000010">
    <property type="entry name" value="Multidrug resistance-associated ABC transporter"/>
    <property type="match status" value="1"/>
</dbReference>
<dbReference type="Gene3D" id="1.20.1560.10">
    <property type="entry name" value="ABC transporter type 1, transmembrane domain"/>
    <property type="match status" value="2"/>
</dbReference>
<dbReference type="Gene3D" id="3.40.50.300">
    <property type="entry name" value="P-loop containing nucleotide triphosphate hydrolases"/>
    <property type="match status" value="2"/>
</dbReference>
<dbReference type="InterPro" id="IPR003593">
    <property type="entry name" value="AAA+_ATPase"/>
</dbReference>
<dbReference type="InterPro" id="IPR011527">
    <property type="entry name" value="ABC1_TM_dom"/>
</dbReference>
<dbReference type="InterPro" id="IPR036640">
    <property type="entry name" value="ABC1_TM_sf"/>
</dbReference>
<dbReference type="InterPro" id="IPR003439">
    <property type="entry name" value="ABC_transporter-like_ATP-bd"/>
</dbReference>
<dbReference type="InterPro" id="IPR017871">
    <property type="entry name" value="ABC_transporter-like_CS"/>
</dbReference>
<dbReference type="InterPro" id="IPR050173">
    <property type="entry name" value="ABC_transporter_C-like"/>
</dbReference>
<dbReference type="InterPro" id="IPR027417">
    <property type="entry name" value="P-loop_NTPase"/>
</dbReference>
<dbReference type="PANTHER" id="PTHR24223:SF353">
    <property type="entry name" value="ABC TRANSPORTER ATP-BINDING PROTEIN_PERMEASE VMR1-RELATED"/>
    <property type="match status" value="1"/>
</dbReference>
<dbReference type="PANTHER" id="PTHR24223">
    <property type="entry name" value="ATP-BINDING CASSETTE SUB-FAMILY C"/>
    <property type="match status" value="1"/>
</dbReference>
<dbReference type="Pfam" id="PF00664">
    <property type="entry name" value="ABC_membrane"/>
    <property type="match status" value="2"/>
</dbReference>
<dbReference type="Pfam" id="PF00005">
    <property type="entry name" value="ABC_tran"/>
    <property type="match status" value="2"/>
</dbReference>
<dbReference type="SMART" id="SM00382">
    <property type="entry name" value="AAA"/>
    <property type="match status" value="2"/>
</dbReference>
<dbReference type="SUPFAM" id="SSF90123">
    <property type="entry name" value="ABC transporter transmembrane region"/>
    <property type="match status" value="2"/>
</dbReference>
<dbReference type="SUPFAM" id="SSF52540">
    <property type="entry name" value="P-loop containing nucleoside triphosphate hydrolases"/>
    <property type="match status" value="2"/>
</dbReference>
<dbReference type="PROSITE" id="PS50929">
    <property type="entry name" value="ABC_TM1F"/>
    <property type="match status" value="2"/>
</dbReference>
<dbReference type="PROSITE" id="PS00211">
    <property type="entry name" value="ABC_TRANSPORTER_1"/>
    <property type="match status" value="2"/>
</dbReference>
<dbReference type="PROSITE" id="PS50893">
    <property type="entry name" value="ABC_TRANSPORTER_2"/>
    <property type="match status" value="2"/>
</dbReference>
<reference key="1">
    <citation type="journal article" date="1994" name="Science">
        <title>Complete nucleotide sequence of Saccharomyces cerevisiae chromosome VIII.</title>
        <authorList>
            <person name="Johnston M."/>
            <person name="Andrews S."/>
            <person name="Brinkman R."/>
            <person name="Cooper J."/>
            <person name="Ding H."/>
            <person name="Dover J."/>
            <person name="Du Z."/>
            <person name="Favello A."/>
            <person name="Fulton L."/>
            <person name="Gattung S."/>
            <person name="Geisel C."/>
            <person name="Kirsten J."/>
            <person name="Kucaba T."/>
            <person name="Hillier L.W."/>
            <person name="Jier M."/>
            <person name="Johnston L."/>
            <person name="Langston Y."/>
            <person name="Latreille P."/>
            <person name="Louis E.J."/>
            <person name="Macri C."/>
            <person name="Mardis E."/>
            <person name="Menezes S."/>
            <person name="Mouser L."/>
            <person name="Nhan M."/>
            <person name="Rifkin L."/>
            <person name="Riles L."/>
            <person name="St Peter H."/>
            <person name="Trevaskis E."/>
            <person name="Vaughan K."/>
            <person name="Vignati D."/>
            <person name="Wilcox L."/>
            <person name="Wohldman P."/>
            <person name="Waterston R."/>
            <person name="Wilson R."/>
            <person name="Vaudin M."/>
        </authorList>
    </citation>
    <scope>NUCLEOTIDE SEQUENCE [LARGE SCALE GENOMIC DNA]</scope>
    <source>
        <strain>ATCC 204508 / S288c</strain>
    </source>
</reference>
<reference key="2">
    <citation type="journal article" date="2014" name="G3 (Bethesda)">
        <title>The reference genome sequence of Saccharomyces cerevisiae: Then and now.</title>
        <authorList>
            <person name="Engel S.R."/>
            <person name="Dietrich F.S."/>
            <person name="Fisk D.G."/>
            <person name="Binkley G."/>
            <person name="Balakrishnan R."/>
            <person name="Costanzo M.C."/>
            <person name="Dwight S.S."/>
            <person name="Hitz B.C."/>
            <person name="Karra K."/>
            <person name="Nash R.S."/>
            <person name="Weng S."/>
            <person name="Wong E.D."/>
            <person name="Lloyd P."/>
            <person name="Skrzypek M.S."/>
            <person name="Miyasato S.R."/>
            <person name="Simison M."/>
            <person name="Cherry J.M."/>
        </authorList>
    </citation>
    <scope>GENOME REANNOTATION</scope>
    <source>
        <strain>ATCC 204508 / S288c</strain>
    </source>
</reference>
<reference key="3">
    <citation type="journal article" date="1997" name="Nat. Genet.">
        <title>Complete inventory of the yeast ABC proteins.</title>
        <authorList>
            <person name="Decottignies A."/>
            <person name="Goffeau A."/>
        </authorList>
    </citation>
    <scope>PROTEIN FAMILY</scope>
</reference>
<reference key="4">
    <citation type="journal article" date="2003" name="J. Biol. Chem.">
        <title>Aft1p and Aft2p mediate iron-responsive gene expression in yeast through related promoter elements.</title>
        <authorList>
            <person name="Rutherford J.C."/>
            <person name="Jaron S."/>
            <person name="Winge D.R."/>
        </authorList>
    </citation>
    <scope>INDUCTION</scope>
</reference>
<reference key="5">
    <citation type="journal article" date="2005" name="Physiol. Genomics">
        <title>Gene expression profiling and phenotype analyses of S. cerevisiae in response to changing copper reveals six genes with new roles in copper and iron metabolism.</title>
        <authorList>
            <person name="van Bakel H."/>
            <person name="Strengman E."/>
            <person name="Wijmenga C."/>
            <person name="Holstege F.C.P."/>
        </authorList>
    </citation>
    <scope>INDUCTION</scope>
</reference>
<reference key="6">
    <citation type="journal article" date="2005" name="Yeast">
        <title>The Saccharomyces cerevisiae Sub2 protein suppresses heterochromatic silencing at telomeres and subtelomeric genes.</title>
        <authorList>
            <person name="Lahue E."/>
            <person name="Heckathorn J."/>
            <person name="Meyer Z."/>
            <person name="Smith J."/>
            <person name="Wolfe C."/>
        </authorList>
    </citation>
    <scope>INDUCTION</scope>
</reference>